<feature type="chain" id="PRO_0000285390" description="Hsp70 nucleotide exchange factor FES1">
    <location>
        <begin position="1"/>
        <end position="267"/>
    </location>
</feature>
<feature type="repeat" description="ARM 1">
    <location>
        <begin position="58"/>
        <end position="99"/>
    </location>
</feature>
<feature type="repeat" description="ARM 2">
    <location>
        <begin position="118"/>
        <end position="157"/>
    </location>
</feature>
<feature type="repeat" description="ARM 3">
    <location>
        <begin position="160"/>
        <end position="201"/>
    </location>
</feature>
<feature type="region of interest" description="Disordered" evidence="2">
    <location>
        <begin position="17"/>
        <end position="63"/>
    </location>
</feature>
<feature type="compositionally biased region" description="Low complexity" evidence="2">
    <location>
        <begin position="23"/>
        <end position="49"/>
    </location>
</feature>
<feature type="compositionally biased region" description="Polar residues" evidence="2">
    <location>
        <begin position="54"/>
        <end position="63"/>
    </location>
</feature>
<organism>
    <name type="scientific">Chaetomium globosum (strain ATCC 6205 / CBS 148.51 / DSM 1962 / NBRC 6347 / NRRL 1970)</name>
    <name type="common">Soil fungus</name>
    <dbReference type="NCBI Taxonomy" id="306901"/>
    <lineage>
        <taxon>Eukaryota</taxon>
        <taxon>Fungi</taxon>
        <taxon>Dikarya</taxon>
        <taxon>Ascomycota</taxon>
        <taxon>Pezizomycotina</taxon>
        <taxon>Sordariomycetes</taxon>
        <taxon>Sordariomycetidae</taxon>
        <taxon>Sordariales</taxon>
        <taxon>Chaetomiaceae</taxon>
        <taxon>Chaetomium</taxon>
    </lineage>
</organism>
<dbReference type="EMBL" id="CH408033">
    <property type="protein sequence ID" value="EAQ85904.1"/>
    <property type="molecule type" value="Genomic_DNA"/>
</dbReference>
<dbReference type="RefSeq" id="XP_001224813.1">
    <property type="nucleotide sequence ID" value="XM_001224812.1"/>
</dbReference>
<dbReference type="SMR" id="Q2GXZ7"/>
<dbReference type="FunCoup" id="Q2GXZ7">
    <property type="interactions" value="177"/>
</dbReference>
<dbReference type="STRING" id="306901.Q2GXZ7"/>
<dbReference type="GeneID" id="4394355"/>
<dbReference type="VEuPathDB" id="FungiDB:CHGG_07157"/>
<dbReference type="eggNOG" id="KOG2160">
    <property type="taxonomic scope" value="Eukaryota"/>
</dbReference>
<dbReference type="HOGENOM" id="CLU_084507_0_0_1"/>
<dbReference type="InParanoid" id="Q2GXZ7"/>
<dbReference type="OMA" id="LKWSVEN"/>
<dbReference type="OrthoDB" id="10250458at2759"/>
<dbReference type="Proteomes" id="UP000001056">
    <property type="component" value="Unassembled WGS sequence"/>
</dbReference>
<dbReference type="GO" id="GO:0005783">
    <property type="term" value="C:endoplasmic reticulum"/>
    <property type="evidence" value="ECO:0007669"/>
    <property type="project" value="TreeGrafter"/>
</dbReference>
<dbReference type="GO" id="GO:0000774">
    <property type="term" value="F:adenyl-nucleotide exchange factor activity"/>
    <property type="evidence" value="ECO:0007669"/>
    <property type="project" value="TreeGrafter"/>
</dbReference>
<dbReference type="GO" id="GO:0006417">
    <property type="term" value="P:regulation of translation"/>
    <property type="evidence" value="ECO:0007669"/>
    <property type="project" value="UniProtKB-KW"/>
</dbReference>
<dbReference type="FunFam" id="1.25.10.10:FF:000434">
    <property type="entry name" value="Hsp70 nucleotide exchange factor fes1"/>
    <property type="match status" value="1"/>
</dbReference>
<dbReference type="Gene3D" id="1.25.10.10">
    <property type="entry name" value="Leucine-rich Repeat Variant"/>
    <property type="match status" value="1"/>
</dbReference>
<dbReference type="InterPro" id="IPR011989">
    <property type="entry name" value="ARM-like"/>
</dbReference>
<dbReference type="InterPro" id="IPR016024">
    <property type="entry name" value="ARM-type_fold"/>
</dbReference>
<dbReference type="InterPro" id="IPR050693">
    <property type="entry name" value="Hsp70_NEF-Inhibitors"/>
</dbReference>
<dbReference type="InterPro" id="IPR013918">
    <property type="entry name" value="Nucleotide_exch_fac_Fes1"/>
</dbReference>
<dbReference type="PANTHER" id="PTHR19316:SF18">
    <property type="entry name" value="HSP70-BINDING PROTEIN 1"/>
    <property type="match status" value="1"/>
</dbReference>
<dbReference type="PANTHER" id="PTHR19316">
    <property type="entry name" value="PROTEIN FOLDING REGULATOR"/>
    <property type="match status" value="1"/>
</dbReference>
<dbReference type="Pfam" id="PF08609">
    <property type="entry name" value="Fes1"/>
    <property type="match status" value="1"/>
</dbReference>
<dbReference type="SUPFAM" id="SSF48371">
    <property type="entry name" value="ARM repeat"/>
    <property type="match status" value="1"/>
</dbReference>
<proteinExistence type="inferred from homology"/>
<reference key="1">
    <citation type="journal article" date="2015" name="Genome Announc.">
        <title>Draft genome sequence of the cellulolytic fungus Chaetomium globosum.</title>
        <authorList>
            <person name="Cuomo C.A."/>
            <person name="Untereiner W.A."/>
            <person name="Ma L.-J."/>
            <person name="Grabherr M."/>
            <person name="Birren B.W."/>
        </authorList>
    </citation>
    <scope>NUCLEOTIDE SEQUENCE [LARGE SCALE GENOMIC DNA]</scope>
    <source>
        <strain>ATCC 6205 / CBS 148.51 / DSM 1962 / NBRC 6347 / NRRL 1970</strain>
    </source>
</reference>
<gene>
    <name type="primary">FES1</name>
    <name type="ORF">CHGG_07157</name>
</gene>
<sequence length="267" mass="28344">MERNLNSLLKWSIENSVPSSAPAANGTNGTNGTTAVTTHSSDSNNTSTTPADAPSQTNGTSAAAANSKLNPEILSALFGGPSEAELMKAAMEVLTDKSATLDNQLIAFDNFEQLIESLDNANNLEPLKLWAPLLGLLAHDEAEMRRMAAWCVGTAVQNNARTQERLLAEGGLPILVGLATKEGEDVAVRRKAIYALSSAVRNCQPAMDAATAELSAHGKGDKVDAGDMDAVDGVIEWLRGEGERCVNGVKTFYDVGIGYQRRREERG</sequence>
<protein>
    <recommendedName>
        <fullName>Hsp70 nucleotide exchange factor FES1</fullName>
    </recommendedName>
</protein>
<evidence type="ECO:0000250" key="1"/>
<evidence type="ECO:0000256" key="2">
    <source>
        <dbReference type="SAM" id="MobiDB-lite"/>
    </source>
</evidence>
<evidence type="ECO:0000305" key="3"/>
<name>FES1_CHAGB</name>
<comment type="function">
    <text evidence="1">Functions as a nucleotide exchange factor (NEF) for Hsp70 chaperones which accelerates the release of ADP. Required for fully efficient Hsp70-mediated folding of proteins (By similarity).</text>
</comment>
<comment type="subcellular location">
    <subcellularLocation>
        <location evidence="1">Cytoplasm</location>
    </subcellularLocation>
</comment>
<comment type="similarity">
    <text evidence="3">Belongs to the FES1 family.</text>
</comment>
<keyword id="KW-0963">Cytoplasm</keyword>
<keyword id="KW-1185">Reference proteome</keyword>
<keyword id="KW-0677">Repeat</keyword>
<keyword id="KW-0810">Translation regulation</keyword>
<accession>Q2GXZ7</accession>